<protein>
    <recommendedName>
        <fullName evidence="1">Pyrophosphatase PpaX</fullName>
        <ecNumber evidence="1">3.6.1.1</ecNumber>
    </recommendedName>
</protein>
<proteinExistence type="inferred from homology"/>
<gene>
    <name evidence="1" type="primary">ppaX</name>
    <name type="ordered locus">BcerKBAB4_4954</name>
</gene>
<organism>
    <name type="scientific">Bacillus mycoides (strain KBAB4)</name>
    <name type="common">Bacillus weihenstephanensis</name>
    <dbReference type="NCBI Taxonomy" id="315730"/>
    <lineage>
        <taxon>Bacteria</taxon>
        <taxon>Bacillati</taxon>
        <taxon>Bacillota</taxon>
        <taxon>Bacilli</taxon>
        <taxon>Bacillales</taxon>
        <taxon>Bacillaceae</taxon>
        <taxon>Bacillus</taxon>
        <taxon>Bacillus cereus group</taxon>
    </lineage>
</organism>
<dbReference type="EC" id="3.6.1.1" evidence="1"/>
<dbReference type="EMBL" id="CP000903">
    <property type="protein sequence ID" value="ABY46102.1"/>
    <property type="molecule type" value="Genomic_DNA"/>
</dbReference>
<dbReference type="RefSeq" id="WP_002112826.1">
    <property type="nucleotide sequence ID" value="NC_010184.1"/>
</dbReference>
<dbReference type="SMR" id="A9VQ75"/>
<dbReference type="GeneID" id="66265308"/>
<dbReference type="KEGG" id="bwe:BcerKBAB4_4954"/>
<dbReference type="eggNOG" id="COG0546">
    <property type="taxonomic scope" value="Bacteria"/>
</dbReference>
<dbReference type="HOGENOM" id="CLU_045011_19_3_9"/>
<dbReference type="Proteomes" id="UP000002154">
    <property type="component" value="Chromosome"/>
</dbReference>
<dbReference type="GO" id="GO:0005829">
    <property type="term" value="C:cytosol"/>
    <property type="evidence" value="ECO:0007669"/>
    <property type="project" value="TreeGrafter"/>
</dbReference>
<dbReference type="GO" id="GO:0004427">
    <property type="term" value="F:inorganic diphosphate phosphatase activity"/>
    <property type="evidence" value="ECO:0007669"/>
    <property type="project" value="UniProtKB-UniRule"/>
</dbReference>
<dbReference type="GO" id="GO:0000287">
    <property type="term" value="F:magnesium ion binding"/>
    <property type="evidence" value="ECO:0007669"/>
    <property type="project" value="UniProtKB-UniRule"/>
</dbReference>
<dbReference type="GO" id="GO:0008967">
    <property type="term" value="F:phosphoglycolate phosphatase activity"/>
    <property type="evidence" value="ECO:0007669"/>
    <property type="project" value="TreeGrafter"/>
</dbReference>
<dbReference type="GO" id="GO:0006281">
    <property type="term" value="P:DNA repair"/>
    <property type="evidence" value="ECO:0007669"/>
    <property type="project" value="TreeGrafter"/>
</dbReference>
<dbReference type="CDD" id="cd02616">
    <property type="entry name" value="HAD_PPase"/>
    <property type="match status" value="1"/>
</dbReference>
<dbReference type="FunFam" id="3.40.50.1000:FF:000022">
    <property type="entry name" value="Phosphoglycolate phosphatase"/>
    <property type="match status" value="1"/>
</dbReference>
<dbReference type="FunFam" id="1.10.150.240:FF:000008">
    <property type="entry name" value="Pyrophosphatase PpaX"/>
    <property type="match status" value="1"/>
</dbReference>
<dbReference type="Gene3D" id="3.40.50.1000">
    <property type="entry name" value="HAD superfamily/HAD-like"/>
    <property type="match status" value="1"/>
</dbReference>
<dbReference type="Gene3D" id="1.10.150.240">
    <property type="entry name" value="Putative phosphatase, domain 2"/>
    <property type="match status" value="1"/>
</dbReference>
<dbReference type="HAMAP" id="MF_01250">
    <property type="entry name" value="Pyrophosphat_PpaX"/>
    <property type="match status" value="1"/>
</dbReference>
<dbReference type="InterPro" id="IPR050155">
    <property type="entry name" value="HAD-like_hydrolase_sf"/>
</dbReference>
<dbReference type="InterPro" id="IPR036412">
    <property type="entry name" value="HAD-like_sf"/>
</dbReference>
<dbReference type="InterPro" id="IPR006439">
    <property type="entry name" value="HAD-SF_hydro_IA"/>
</dbReference>
<dbReference type="InterPro" id="IPR006549">
    <property type="entry name" value="HAD-SF_hydro_IIIA"/>
</dbReference>
<dbReference type="InterPro" id="IPR041492">
    <property type="entry name" value="HAD_2"/>
</dbReference>
<dbReference type="InterPro" id="IPR023214">
    <property type="entry name" value="HAD_sf"/>
</dbReference>
<dbReference type="InterPro" id="IPR023198">
    <property type="entry name" value="PGP-like_dom2"/>
</dbReference>
<dbReference type="InterPro" id="IPR023733">
    <property type="entry name" value="Pyrophosphatase_Ppax"/>
</dbReference>
<dbReference type="NCBIfam" id="TIGR01549">
    <property type="entry name" value="HAD-SF-IA-v1"/>
    <property type="match status" value="1"/>
</dbReference>
<dbReference type="NCBIfam" id="TIGR01509">
    <property type="entry name" value="HAD-SF-IA-v3"/>
    <property type="match status" value="1"/>
</dbReference>
<dbReference type="NCBIfam" id="TIGR01662">
    <property type="entry name" value="HAD-SF-IIIA"/>
    <property type="match status" value="1"/>
</dbReference>
<dbReference type="NCBIfam" id="NF009804">
    <property type="entry name" value="PRK13288.1"/>
    <property type="match status" value="1"/>
</dbReference>
<dbReference type="PANTHER" id="PTHR43434">
    <property type="entry name" value="PHOSPHOGLYCOLATE PHOSPHATASE"/>
    <property type="match status" value="1"/>
</dbReference>
<dbReference type="PANTHER" id="PTHR43434:SF26">
    <property type="entry name" value="PYROPHOSPHATASE PPAX"/>
    <property type="match status" value="1"/>
</dbReference>
<dbReference type="Pfam" id="PF13419">
    <property type="entry name" value="HAD_2"/>
    <property type="match status" value="1"/>
</dbReference>
<dbReference type="PRINTS" id="PR00413">
    <property type="entry name" value="HADHALOGNASE"/>
</dbReference>
<dbReference type="SFLD" id="SFLDG01135">
    <property type="entry name" value="C1.5.6:_HAD__Beta-PGM__Phospha"/>
    <property type="match status" value="1"/>
</dbReference>
<dbReference type="SFLD" id="SFLDS00003">
    <property type="entry name" value="Haloacid_Dehalogenase"/>
    <property type="match status" value="1"/>
</dbReference>
<dbReference type="SUPFAM" id="SSF56784">
    <property type="entry name" value="HAD-like"/>
    <property type="match status" value="1"/>
</dbReference>
<sequence length="215" mass="24607">MKINTVLFDLDGTLINTNELIISSFLHTLNHYYSNQYKREDVLPFIGPSLHDTFSKIDASKVEEMITCYRQFNHEHHDELVEEYETVYETVQELKKQGYKIGIVTTKARQTVEMGLKLSKLDQFFDVVVTIDDVEHVKPHPEPLQKALELLDAKPEETLMVGDNHHDIVGGQNAGTKTVAVSWTLKGRAYLEAYKPDYVLDKMSDLLPILSRING</sequence>
<accession>A9VQ75</accession>
<evidence type="ECO:0000255" key="1">
    <source>
        <dbReference type="HAMAP-Rule" id="MF_01250"/>
    </source>
</evidence>
<keyword id="KW-0378">Hydrolase</keyword>
<keyword id="KW-0460">Magnesium</keyword>
<reference key="1">
    <citation type="journal article" date="2008" name="Chem. Biol. Interact.">
        <title>Extending the Bacillus cereus group genomics to putative food-borne pathogens of different toxicity.</title>
        <authorList>
            <person name="Lapidus A."/>
            <person name="Goltsman E."/>
            <person name="Auger S."/>
            <person name="Galleron N."/>
            <person name="Segurens B."/>
            <person name="Dossat C."/>
            <person name="Land M.L."/>
            <person name="Broussolle V."/>
            <person name="Brillard J."/>
            <person name="Guinebretiere M.-H."/>
            <person name="Sanchis V."/>
            <person name="Nguen-the C."/>
            <person name="Lereclus D."/>
            <person name="Richardson P."/>
            <person name="Wincker P."/>
            <person name="Weissenbach J."/>
            <person name="Ehrlich S.D."/>
            <person name="Sorokin A."/>
        </authorList>
    </citation>
    <scope>NUCLEOTIDE SEQUENCE [LARGE SCALE GENOMIC DNA]</scope>
    <source>
        <strain>KBAB4</strain>
    </source>
</reference>
<feature type="chain" id="PRO_1000139927" description="Pyrophosphatase PpaX">
    <location>
        <begin position="1"/>
        <end position="215"/>
    </location>
</feature>
<feature type="active site" description="Nucleophile" evidence="1">
    <location>
        <position position="9"/>
    </location>
</feature>
<comment type="function">
    <text evidence="1">Hydrolyzes pyrophosphate formed during P-Ser-HPr dephosphorylation by HPrK/P. Might play a role in controlling the intracellular pyrophosphate pool.</text>
</comment>
<comment type="catalytic activity">
    <reaction evidence="1">
        <text>diphosphate + H2O = 2 phosphate + H(+)</text>
        <dbReference type="Rhea" id="RHEA:24576"/>
        <dbReference type="ChEBI" id="CHEBI:15377"/>
        <dbReference type="ChEBI" id="CHEBI:15378"/>
        <dbReference type="ChEBI" id="CHEBI:33019"/>
        <dbReference type="ChEBI" id="CHEBI:43474"/>
        <dbReference type="EC" id="3.6.1.1"/>
    </reaction>
</comment>
<comment type="cofactor">
    <cofactor evidence="1">
        <name>Mg(2+)</name>
        <dbReference type="ChEBI" id="CHEBI:18420"/>
    </cofactor>
</comment>
<comment type="similarity">
    <text evidence="1">Belongs to the HAD-like hydrolase superfamily. PpaX family.</text>
</comment>
<name>PPAX_BACMK</name>